<reference key="1">
    <citation type="journal article" date="2010" name="Genome Biol. Evol.">
        <title>Continuing evolution of Burkholderia mallei through genome reduction and large-scale rearrangements.</title>
        <authorList>
            <person name="Losada L."/>
            <person name="Ronning C.M."/>
            <person name="DeShazer D."/>
            <person name="Woods D."/>
            <person name="Fedorova N."/>
            <person name="Kim H.S."/>
            <person name="Shabalina S.A."/>
            <person name="Pearson T.R."/>
            <person name="Brinkac L."/>
            <person name="Tan P."/>
            <person name="Nandi T."/>
            <person name="Crabtree J."/>
            <person name="Badger J."/>
            <person name="Beckstrom-Sternberg S."/>
            <person name="Saqib M."/>
            <person name="Schutzer S.E."/>
            <person name="Keim P."/>
            <person name="Nierman W.C."/>
        </authorList>
    </citation>
    <scope>NUCLEOTIDE SEQUENCE [LARGE SCALE GENOMIC DNA]</scope>
    <source>
        <strain>668</strain>
    </source>
</reference>
<name>DDL_BURP6</name>
<protein>
    <recommendedName>
        <fullName evidence="2">D-alanine--D-alanine ligase</fullName>
        <ecNumber evidence="2">6.3.2.4</ecNumber>
    </recommendedName>
    <alternativeName>
        <fullName evidence="2">D-Ala-D-Ala ligase</fullName>
    </alternativeName>
    <alternativeName>
        <fullName evidence="2">D-alanylalanine synthetase</fullName>
    </alternativeName>
</protein>
<keyword id="KW-0067">ATP-binding</keyword>
<keyword id="KW-0133">Cell shape</keyword>
<keyword id="KW-0961">Cell wall biogenesis/degradation</keyword>
<keyword id="KW-0963">Cytoplasm</keyword>
<keyword id="KW-0436">Ligase</keyword>
<keyword id="KW-0460">Magnesium</keyword>
<keyword id="KW-0464">Manganese</keyword>
<keyword id="KW-0479">Metal-binding</keyword>
<keyword id="KW-0547">Nucleotide-binding</keyword>
<keyword id="KW-0573">Peptidoglycan synthesis</keyword>
<comment type="function">
    <text evidence="2">Cell wall formation.</text>
</comment>
<comment type="catalytic activity">
    <reaction evidence="2">
        <text>2 D-alanine + ATP = D-alanyl-D-alanine + ADP + phosphate + H(+)</text>
        <dbReference type="Rhea" id="RHEA:11224"/>
        <dbReference type="ChEBI" id="CHEBI:15378"/>
        <dbReference type="ChEBI" id="CHEBI:30616"/>
        <dbReference type="ChEBI" id="CHEBI:43474"/>
        <dbReference type="ChEBI" id="CHEBI:57416"/>
        <dbReference type="ChEBI" id="CHEBI:57822"/>
        <dbReference type="ChEBI" id="CHEBI:456216"/>
        <dbReference type="EC" id="6.3.2.4"/>
    </reaction>
</comment>
<comment type="cofactor">
    <cofactor evidence="1">
        <name>Mg(2+)</name>
        <dbReference type="ChEBI" id="CHEBI:18420"/>
    </cofactor>
    <cofactor evidence="1">
        <name>Mn(2+)</name>
        <dbReference type="ChEBI" id="CHEBI:29035"/>
    </cofactor>
    <text evidence="1">Binds 2 magnesium or manganese ions per subunit.</text>
</comment>
<comment type="pathway">
    <text evidence="2">Cell wall biogenesis; peptidoglycan biosynthesis.</text>
</comment>
<comment type="subcellular location">
    <subcellularLocation>
        <location evidence="2">Cytoplasm</location>
    </subcellularLocation>
</comment>
<comment type="similarity">
    <text evidence="2">Belongs to the D-alanine--D-alanine ligase family.</text>
</comment>
<gene>
    <name evidence="2" type="primary">ddl</name>
    <name type="ordered locus">BURPS668_3523</name>
</gene>
<proteinExistence type="inferred from homology"/>
<evidence type="ECO:0000250" key="1"/>
<evidence type="ECO:0000255" key="2">
    <source>
        <dbReference type="HAMAP-Rule" id="MF_00047"/>
    </source>
</evidence>
<sequence length="312" mass="33313">MSGIDPKRFGKVAVLLGGDSAEREVSLNSGRLVLQGLRDAGIDAHPFDPAQRPLAALKDEGFVRAFNALHGGYGENGQIQGALDFYGIRYTGSGVLGSALGLDKFRTKLVWQQTGIPTPPFETVMRGDDYAARAQDIAAKLGVPLFVKPASEGSSVAVEKVKSADALPAALEEAAKHDKIVIVEKSIEGGGEYTACIAADLDLPLIRIVPAGEFYDYHAKYIANDTQYLIPCGLDAAKEAEFKRIARRAFDVLGCTDWGRADFMLDAAGNPYFLEVNTAPGMTDHSLPPKAARAVGIGYSELVVKVLSLTLD</sequence>
<organism>
    <name type="scientific">Burkholderia pseudomallei (strain 668)</name>
    <dbReference type="NCBI Taxonomy" id="320373"/>
    <lineage>
        <taxon>Bacteria</taxon>
        <taxon>Pseudomonadati</taxon>
        <taxon>Pseudomonadota</taxon>
        <taxon>Betaproteobacteria</taxon>
        <taxon>Burkholderiales</taxon>
        <taxon>Burkholderiaceae</taxon>
        <taxon>Burkholderia</taxon>
        <taxon>pseudomallei group</taxon>
    </lineage>
</organism>
<accession>A3NDW2</accession>
<dbReference type="EC" id="6.3.2.4" evidence="2"/>
<dbReference type="EMBL" id="CP000570">
    <property type="protein sequence ID" value="ABN84024.1"/>
    <property type="molecule type" value="Genomic_DNA"/>
</dbReference>
<dbReference type="RefSeq" id="WP_011852237.1">
    <property type="nucleotide sequence ID" value="NC_009074.1"/>
</dbReference>
<dbReference type="SMR" id="A3NDW2"/>
<dbReference type="KEGG" id="bpd:BURPS668_3523"/>
<dbReference type="HOGENOM" id="CLU_039268_1_2_4"/>
<dbReference type="UniPathway" id="UPA00219"/>
<dbReference type="GO" id="GO:0005829">
    <property type="term" value="C:cytosol"/>
    <property type="evidence" value="ECO:0007669"/>
    <property type="project" value="TreeGrafter"/>
</dbReference>
<dbReference type="GO" id="GO:0005524">
    <property type="term" value="F:ATP binding"/>
    <property type="evidence" value="ECO:0007669"/>
    <property type="project" value="UniProtKB-KW"/>
</dbReference>
<dbReference type="GO" id="GO:0008716">
    <property type="term" value="F:D-alanine-D-alanine ligase activity"/>
    <property type="evidence" value="ECO:0007669"/>
    <property type="project" value="UniProtKB-UniRule"/>
</dbReference>
<dbReference type="GO" id="GO:0046872">
    <property type="term" value="F:metal ion binding"/>
    <property type="evidence" value="ECO:0007669"/>
    <property type="project" value="UniProtKB-KW"/>
</dbReference>
<dbReference type="GO" id="GO:0071555">
    <property type="term" value="P:cell wall organization"/>
    <property type="evidence" value="ECO:0007669"/>
    <property type="project" value="UniProtKB-KW"/>
</dbReference>
<dbReference type="GO" id="GO:0009252">
    <property type="term" value="P:peptidoglycan biosynthetic process"/>
    <property type="evidence" value="ECO:0007669"/>
    <property type="project" value="UniProtKB-UniRule"/>
</dbReference>
<dbReference type="GO" id="GO:0008360">
    <property type="term" value="P:regulation of cell shape"/>
    <property type="evidence" value="ECO:0007669"/>
    <property type="project" value="UniProtKB-KW"/>
</dbReference>
<dbReference type="FunFam" id="3.30.1490.20:FF:000007">
    <property type="entry name" value="D-alanine--D-alanine ligase"/>
    <property type="match status" value="1"/>
</dbReference>
<dbReference type="FunFam" id="3.30.470.20:FF:000008">
    <property type="entry name" value="D-alanine--D-alanine ligase"/>
    <property type="match status" value="1"/>
</dbReference>
<dbReference type="FunFam" id="3.40.50.20:FF:000013">
    <property type="entry name" value="D-alanine--D-alanine ligase"/>
    <property type="match status" value="1"/>
</dbReference>
<dbReference type="Gene3D" id="3.40.50.20">
    <property type="match status" value="1"/>
</dbReference>
<dbReference type="Gene3D" id="3.30.1490.20">
    <property type="entry name" value="ATP-grasp fold, A domain"/>
    <property type="match status" value="1"/>
</dbReference>
<dbReference type="Gene3D" id="3.30.470.20">
    <property type="entry name" value="ATP-grasp fold, B domain"/>
    <property type="match status" value="1"/>
</dbReference>
<dbReference type="HAMAP" id="MF_00047">
    <property type="entry name" value="Dala_Dala_lig"/>
    <property type="match status" value="1"/>
</dbReference>
<dbReference type="InterPro" id="IPR011761">
    <property type="entry name" value="ATP-grasp"/>
</dbReference>
<dbReference type="InterPro" id="IPR013815">
    <property type="entry name" value="ATP_grasp_subdomain_1"/>
</dbReference>
<dbReference type="InterPro" id="IPR000291">
    <property type="entry name" value="D-Ala_lig_Van_CS"/>
</dbReference>
<dbReference type="InterPro" id="IPR005905">
    <property type="entry name" value="D_ala_D_ala"/>
</dbReference>
<dbReference type="InterPro" id="IPR011095">
    <property type="entry name" value="Dala_Dala_lig_C"/>
</dbReference>
<dbReference type="InterPro" id="IPR011127">
    <property type="entry name" value="Dala_Dala_lig_N"/>
</dbReference>
<dbReference type="InterPro" id="IPR016185">
    <property type="entry name" value="PreATP-grasp_dom_sf"/>
</dbReference>
<dbReference type="NCBIfam" id="TIGR01205">
    <property type="entry name" value="D_ala_D_alaTIGR"/>
    <property type="match status" value="1"/>
</dbReference>
<dbReference type="NCBIfam" id="NF002378">
    <property type="entry name" value="PRK01372.1"/>
    <property type="match status" value="1"/>
</dbReference>
<dbReference type="PANTHER" id="PTHR23132">
    <property type="entry name" value="D-ALANINE--D-ALANINE LIGASE"/>
    <property type="match status" value="1"/>
</dbReference>
<dbReference type="PANTHER" id="PTHR23132:SF23">
    <property type="entry name" value="D-ALANINE--D-ALANINE LIGASE B"/>
    <property type="match status" value="1"/>
</dbReference>
<dbReference type="Pfam" id="PF07478">
    <property type="entry name" value="Dala_Dala_lig_C"/>
    <property type="match status" value="1"/>
</dbReference>
<dbReference type="Pfam" id="PF01820">
    <property type="entry name" value="Dala_Dala_lig_N"/>
    <property type="match status" value="1"/>
</dbReference>
<dbReference type="PIRSF" id="PIRSF039102">
    <property type="entry name" value="Ddl/VanB"/>
    <property type="match status" value="1"/>
</dbReference>
<dbReference type="SUPFAM" id="SSF56059">
    <property type="entry name" value="Glutathione synthetase ATP-binding domain-like"/>
    <property type="match status" value="1"/>
</dbReference>
<dbReference type="SUPFAM" id="SSF52440">
    <property type="entry name" value="PreATP-grasp domain"/>
    <property type="match status" value="1"/>
</dbReference>
<dbReference type="PROSITE" id="PS50975">
    <property type="entry name" value="ATP_GRASP"/>
    <property type="match status" value="1"/>
</dbReference>
<dbReference type="PROSITE" id="PS00843">
    <property type="entry name" value="DALA_DALA_LIGASE_1"/>
    <property type="match status" value="1"/>
</dbReference>
<dbReference type="PROSITE" id="PS00844">
    <property type="entry name" value="DALA_DALA_LIGASE_2"/>
    <property type="match status" value="1"/>
</dbReference>
<feature type="chain" id="PRO_0000341077" description="D-alanine--D-alanine ligase">
    <location>
        <begin position="1"/>
        <end position="312"/>
    </location>
</feature>
<feature type="domain" description="ATP-grasp" evidence="2">
    <location>
        <begin position="108"/>
        <end position="308"/>
    </location>
</feature>
<feature type="binding site" evidence="2">
    <location>
        <begin position="138"/>
        <end position="193"/>
    </location>
    <ligand>
        <name>ATP</name>
        <dbReference type="ChEBI" id="CHEBI:30616"/>
    </ligand>
</feature>
<feature type="binding site" evidence="2">
    <location>
        <position position="262"/>
    </location>
    <ligand>
        <name>Mg(2+)</name>
        <dbReference type="ChEBI" id="CHEBI:18420"/>
        <label>1</label>
    </ligand>
</feature>
<feature type="binding site" evidence="2">
    <location>
        <position position="275"/>
    </location>
    <ligand>
        <name>Mg(2+)</name>
        <dbReference type="ChEBI" id="CHEBI:18420"/>
        <label>1</label>
    </ligand>
</feature>
<feature type="binding site" evidence="2">
    <location>
        <position position="275"/>
    </location>
    <ligand>
        <name>Mg(2+)</name>
        <dbReference type="ChEBI" id="CHEBI:18420"/>
        <label>2</label>
    </ligand>
</feature>
<feature type="binding site" evidence="2">
    <location>
        <position position="277"/>
    </location>
    <ligand>
        <name>Mg(2+)</name>
        <dbReference type="ChEBI" id="CHEBI:18420"/>
        <label>2</label>
    </ligand>
</feature>